<comment type="function">
    <text evidence="1 7">Acts as a transcriptional repressor (PubMed:12724404). May function in the assembly and/or enzymatic activity of the Sin3A corepressor complex or in mediating interactions between the complex and other regulatory complexes (PubMed:12724404). Plays a role in the regulation of epigenetic modifications at the PWS/AS imprinting center near the SNRPN promoter, where it might function as part of a complex with RB1 and ARID4A. Involved in spermatogenesis, together with ARID4A, where it functions as a transcriptional coactivator for AR (androgen receptor) and enhances expression of genes required for sperm maturation. Regulates expression of the tight junction protein CLDN3 in the testis, which is important for integrity of the blood-testis barrier. Plays a role in myeloid homeostasis where it regulates the histone methylation state of bone marrow cells and expression of various genes involved in hematopoiesis. May function as a leukemia suppressor (By similarity).</text>
</comment>
<comment type="subunit">
    <text evidence="1 7 9">Component of a Sin3A corepressor complex consisting of SIN3A, SAP130, SUDS3/SAP45, SAP180, HDAC1 and HDAC2 (PubMed:12724404). Interacts with ARID4A (PubMed:17043311). Interacts with AR (By similarity).</text>
</comment>
<comment type="interaction">
    <interactant intactId="EBI-2680990">
        <id>Q4LE39</id>
    </interactant>
    <interactant intactId="EBI-913209">
        <id>P14921</id>
        <label>ETS1</label>
    </interactant>
    <organismsDiffer>false</organismsDiffer>
    <experiments>2</experiments>
</comment>
<comment type="interaction">
    <interactant intactId="EBI-11957452">
        <id>Q4LE39-3</id>
    </interactant>
    <interactant intactId="EBI-9357295">
        <id>Q9BTE6-2</id>
        <label>AARSD1</label>
    </interactant>
    <organismsDiffer>false</organismsDiffer>
    <experiments>3</experiments>
</comment>
<comment type="interaction">
    <interactant intactId="EBI-11957452">
        <id>Q4LE39-3</id>
    </interactant>
    <interactant intactId="EBI-10239299">
        <id>Q9NQM4</id>
        <label>DNAAF6</label>
    </interactant>
    <organismsDiffer>false</organismsDiffer>
    <experiments>3</experiments>
</comment>
<comment type="interaction">
    <interactant intactId="EBI-11957452">
        <id>Q4LE39-3</id>
    </interactant>
    <interactant intactId="EBI-1176455">
        <id>P63172</id>
        <label>DYNLT1</label>
    </interactant>
    <organismsDiffer>false</organismsDiffer>
    <experiments>3</experiments>
</comment>
<comment type="interaction">
    <interactant intactId="EBI-11957452">
        <id>Q4LE39-3</id>
    </interactant>
    <interactant intactId="EBI-769261">
        <id>Q96JC9</id>
        <label>EAF1</label>
    </interactant>
    <organismsDiffer>false</organismsDiffer>
    <experiments>3</experiments>
</comment>
<comment type="interaction">
    <interactant intactId="EBI-11957452">
        <id>Q4LE39-3</id>
    </interactant>
    <interactant intactId="EBI-1642515">
        <id>I6L957</id>
        <label>HNRNPA2B1</label>
    </interactant>
    <organismsDiffer>false</organismsDiffer>
    <experiments>3</experiments>
</comment>
<comment type="interaction">
    <interactant intactId="EBI-11957452">
        <id>Q4LE39-3</id>
    </interactant>
    <interactant intactId="EBI-2859639">
        <id>Q5HYW2</id>
        <label>NHSL2</label>
    </interactant>
    <organismsDiffer>false</organismsDiffer>
    <experiments>3</experiments>
</comment>
<comment type="interaction">
    <interactant intactId="EBI-11957452">
        <id>Q4LE39-3</id>
    </interactant>
    <interactant intactId="EBI-741158">
        <id>Q96HA8</id>
        <label>NTAQ1</label>
    </interactant>
    <organismsDiffer>false</organismsDiffer>
    <experiments>3</experiments>
</comment>
<comment type="interaction">
    <interactant intactId="EBI-11957452">
        <id>Q4LE39-3</id>
    </interactant>
    <interactant intactId="EBI-79893">
        <id>Q92569</id>
        <label>PIK3R3</label>
    </interactant>
    <organismsDiffer>false</organismsDiffer>
    <experiments>3</experiments>
</comment>
<comment type="interaction">
    <interactant intactId="EBI-11957452">
        <id>Q4LE39-3</id>
    </interactant>
    <interactant intactId="EBI-742388">
        <id>Q9H8W4</id>
        <label>PLEKHF2</label>
    </interactant>
    <organismsDiffer>false</organismsDiffer>
    <experiments>3</experiments>
</comment>
<comment type="interaction">
    <interactant intactId="EBI-11957452">
        <id>Q4LE39-3</id>
    </interactant>
    <interactant intactId="EBI-12845180">
        <id>Q6ZRT6</id>
        <label>PRR23B</label>
    </interactant>
    <organismsDiffer>false</organismsDiffer>
    <experiments>3</experiments>
</comment>
<comment type="interaction">
    <interactant intactId="EBI-11957452">
        <id>Q4LE39-3</id>
    </interactant>
    <interactant intactId="EBI-17197485">
        <id>Q9NS25</id>
        <label>SPANXB1</label>
    </interactant>
    <organismsDiffer>false</organismsDiffer>
    <experiments>3</experiments>
</comment>
<comment type="subcellular location">
    <subcellularLocation>
        <location evidence="4">Nucleus</location>
    </subcellularLocation>
    <subcellularLocation>
        <location evidence="6 8">Cytoplasm</location>
    </subcellularLocation>
    <text evidence="8">Cytoplasmic in breast cancer cells.</text>
</comment>
<comment type="alternative products">
    <event type="alternative splicing"/>
    <isoform>
        <id>Q4LE39-1</id>
        <name>1</name>
        <sequence type="displayed"/>
    </isoform>
    <isoform>
        <id>Q4LE39-2</id>
        <name>2</name>
        <sequence type="described" ref="VSP_024231"/>
    </isoform>
    <isoform>
        <id>Q4LE39-3</id>
        <name>3</name>
        <sequence type="described" ref="VSP_024234 VSP_024235"/>
    </isoform>
    <isoform>
        <id>Q4LE39-4</id>
        <name>4</name>
        <sequence type="described" ref="VSP_024230 VSP_024232 VSP_024233"/>
    </isoform>
</comment>
<comment type="tissue specificity">
    <text evidence="6 7 8">Highly expressed in the testis and in breast, lung, colon, pancreatic and ovarian cancers. Expressed at low levels in the thymus, prostate and ovary.</text>
</comment>
<comment type="domain">
    <text evidence="7">The C-terminus mediates interaction with mSin3A corepressor complex.</text>
</comment>
<comment type="domain">
    <text evidence="7">The N-terminus is involved in transcriptional repression by HDAC-independent mechanisms.</text>
</comment>
<comment type="domain">
    <text evidence="7">The ARID domain is involved in stabilizing the mSin3A corepressor complex on DNA.</text>
</comment>
<comment type="sequence caution" evidence="15">
    <conflict type="frameshift">
        <sequence resource="EMBL-CDS" id="AAD41239"/>
    </conflict>
</comment>
<comment type="sequence caution" evidence="15">
    <conflict type="frameshift">
        <sequence resource="EMBL-CDS" id="AAF23433"/>
    </conflict>
</comment>
<comment type="sequence caution" evidence="15">
    <conflict type="erroneous initiation">
        <sequence resource="EMBL-CDS" id="BAB14428"/>
    </conflict>
</comment>
<comment type="sequence caution" evidence="15">
    <conflict type="erroneous initiation">
        <sequence resource="EMBL-CDS" id="BAE06114"/>
    </conflict>
</comment>
<protein>
    <recommendedName>
        <fullName>AT-rich interactive domain-containing protein 4B</fullName>
        <shortName>ARID domain-containing protein 4B</shortName>
    </recommendedName>
    <alternativeName>
        <fullName>180 kDa Sin3-associated polypeptide</fullName>
        <shortName>Sin3-associated polypeptide p180</shortName>
    </alternativeName>
    <alternativeName>
        <fullName>Breast cancer-associated antigen BRCAA1</fullName>
    </alternativeName>
    <alternativeName>
        <fullName>Histone deacetylase complex subunit SAP180</fullName>
    </alternativeName>
    <alternativeName>
        <fullName>Retinoblastoma-binding protein 1-like 1</fullName>
    </alternativeName>
</protein>
<sequence length="1312" mass="147809">MKALDEPPYLTVGTDVSAKYRGAFCEAKIKTAKRLVKVKVTFRHDSSTVEVQDDHIKGPLKVGAIVEVKNLDGAYQEAVINKLTDASWYTVVFDDGDEKTLRRSSLCLKGERHFAESETLDQLPLTNPEHFGTPVIGKKTNRGRRSNHIPEEESSSSSSDEDEDDRKQIDELLGKVVCVDYISLDKKKALWFPALVVCPDCSDEIAVKKDNILVRSFKDGKFTSVPRKDVHEITSDTAPKPDAVLKQAFEQALEFHKSRTIPANWKTELKEDSSSSEAEEEEEEEDDEKEKEDNSSEEEEEIEPFPEERENFLQQLYKFMEDRGTPINKRPVLGYRNLNLFKLFRLVHKLGGFDNIESGAVWKQVYQDLGIPVLNSAAGYNVKCAYKKYLYGFEEYCRSANIEFQMALPEKVVNKQCKECENVKEIKVKEENETEIKEIKMEEERNIIPREEKPIEDEIERKENIKPSLGSKKNLLESIPTHSDQEKEVNIKKPEDNENLDDKDDDTTRVDESLNIKVEAEEEKAKSGDETNKEEDEDDEEAEEEEEEEEEEEDEDDDDNNEEEEFECYPPGMKVQVRYGRGKNQKMYEASIKDSDVEGGEVLYLVHYCGWNVRYDEWIKADKIVRPADKNVPKIKHRKKIKNKLDKEKDKDEKYSPKNCKLRRLSKPPFQTNPSPEMVSKLDLTDAKNSDTAHIKSIEITSILNGLQASESSAEDSEQEDERGAQDMDNNGKEESKIDHLTNNRNDLISKEEQNSSSLLEENKVHADLVISKPVSKSPERLRKDIEVLSEDTDYEEDEVTKKRKDVKKDTTDKSSKPQIKRGKRRYCNTEECLKTGSPGKKEEKAKNKESLCMENSSNSSSDEDEEETKAKMTPTKKYNGLEEKRKSLRTTGFYSGFSEVAEKRIKLLNNSDERLQNSRAKDRKDVWSSIQGQWPKKTLKELFSDSDTEAAASPPHPAPEEGVAEESLQTVAEEESCSPSVELEKPPPVNVDSKPIEEKTVEVNDRKAEFPSSGSNSVLNTPPTTPESPSSVTVTEGSRQQSSVTVSEPLAPNQEEVRSIKSETDSTIEVDSVAGELQDLQSEGNSSPAGFDASVSSSSSNQPEPEHPEKACTGQKRVKDAQGGGSSSKKQKRSHKATVVNNKKKGKGTNSSDSEELSAGESITKSQPVKSVSTGMKSHSTKSPARTQSPGKCGKNGDKDPDLKEPSNRLPKVYKWSFQMSDLENMTSAERITILQEKLQEIRKHYLSLKSEVASIDRRRKRLKKKERESAATSSSSSSPSSSSITAAVMLTLAEPSMSSASQNGMSVECR</sequence>
<accession>Q4LE39</accession>
<accession>A1L465</accession>
<accession>Q3MHV4</accession>
<accession>Q5HY99</accession>
<accession>Q5T2C2</accession>
<accession>Q5T2C3</accession>
<accession>Q5T2C4</accession>
<accession>Q5T2C5</accession>
<accession>Q5T2C6</accession>
<accession>Q6P600</accession>
<accession>Q86UX1</accession>
<accession>Q86WR4</accession>
<accession>Q9H915</accession>
<accession>Q9NYU3</accession>
<accession>Q9NZB6</accession>
<accession>Q9NZG4</accession>
<accession>Q9P2W4</accession>
<accession>Q9UF62</accession>
<accession>Q9Y6E1</accession>
<reference key="1">
    <citation type="journal article" date="2001" name="J. Natl. Cancer Inst.">
        <title>RBP1L1, a retinoblastoma-binding protein-related gene encoding an antigenic epitope abundantly expressed in human carcinomas and normal testis.</title>
        <authorList>
            <person name="Cao J.-N."/>
            <person name="Gao T.-W."/>
            <person name="Stanbridge E.J."/>
            <person name="Irie R."/>
        </authorList>
    </citation>
    <scope>NUCLEOTIDE SEQUENCE [MRNA] (ISOFORM 2)</scope>
    <scope>SUBCELLULAR LOCATION</scope>
    <scope>TISSUE SPECIFICITY</scope>
</reference>
<reference key="2">
    <citation type="journal article" date="2003" name="Mol. Cell. Biol.">
        <title>Identification and characterization of three new components of the mSin3A corepressor complex.</title>
        <authorList>
            <person name="Fleischer T.C."/>
            <person name="Yun U.J."/>
            <person name="Ayer D.E."/>
        </authorList>
    </citation>
    <scope>NUCLEOTIDE SEQUENCE [MRNA] (ISOFORM 1)</scope>
    <scope>FUNCTION</scope>
    <scope>DOMAIN</scope>
    <scope>TISSUE SPECIFICITY</scope>
    <scope>IDENTIFICATION IN A MSIN3A COREPRESSOR COMPLEX WITH SIN3A; SAP130; SUDS3; ARID4B; HDAC1 AND HDAC2</scope>
</reference>
<reference key="3">
    <citation type="journal article" date="2004" name="Cancer Epidemiol. Biomarkers Prev.">
        <title>Characterization of BRCAA1 and its novel antigen epitope identification.</title>
        <authorList>
            <person name="Cui D."/>
            <person name="Jin G."/>
            <person name="Gao T.W."/>
            <person name="Sun T."/>
            <person name="Tian F."/>
            <person name="Estrada G.G."/>
            <person name="Gao H."/>
            <person name="Sarai A."/>
        </authorList>
    </citation>
    <scope>NUCLEOTIDE SEQUENCE [MRNA] (ISOFORM 2)</scope>
    <scope>SUBCELLULAR LOCATION</scope>
    <scope>TISSUE SPECIFICITY</scope>
</reference>
<reference key="4">
    <citation type="submission" date="1999-07" db="EMBL/GenBank/DDBJ databases">
        <title>Rheumatoid arthritis antigenic protein similar to retinoblastoma binding protein 1 (RBP1).</title>
        <authorList>
            <person name="Tanaka M."/>
        </authorList>
    </citation>
    <scope>NUCLEOTIDE SEQUENCE [MRNA] (ISOFORM 4)</scope>
    <source>
        <tissue>Synovium</tissue>
    </source>
</reference>
<reference key="5">
    <citation type="submission" date="2005-03" db="EMBL/GenBank/DDBJ databases">
        <title>Preparation of a set of expression-ready clones of mammalian long cDNAs encoding large proteins by the ORF trap cloning method.</title>
        <authorList>
            <person name="Nakajima D."/>
            <person name="Saito K."/>
            <person name="Yamakawa H."/>
            <person name="Kikuno R.F."/>
            <person name="Nakayama M."/>
            <person name="Ohara R."/>
            <person name="Okazaki N."/>
            <person name="Koga H."/>
            <person name="Nagase T."/>
            <person name="Ohara O."/>
        </authorList>
    </citation>
    <scope>NUCLEOTIDE SEQUENCE [LARGE SCALE MRNA] (ISOFORM 1)</scope>
    <source>
        <tissue>Brain</tissue>
    </source>
</reference>
<reference key="6">
    <citation type="journal article" date="2006" name="Nature">
        <title>The DNA sequence and biological annotation of human chromosome 1.</title>
        <authorList>
            <person name="Gregory S.G."/>
            <person name="Barlow K.F."/>
            <person name="McLay K.E."/>
            <person name="Kaul R."/>
            <person name="Swarbreck D."/>
            <person name="Dunham A."/>
            <person name="Scott C.E."/>
            <person name="Howe K.L."/>
            <person name="Woodfine K."/>
            <person name="Spencer C.C.A."/>
            <person name="Jones M.C."/>
            <person name="Gillson C."/>
            <person name="Searle S."/>
            <person name="Zhou Y."/>
            <person name="Kokocinski F."/>
            <person name="McDonald L."/>
            <person name="Evans R."/>
            <person name="Phillips K."/>
            <person name="Atkinson A."/>
            <person name="Cooper R."/>
            <person name="Jones C."/>
            <person name="Hall R.E."/>
            <person name="Andrews T.D."/>
            <person name="Lloyd C."/>
            <person name="Ainscough R."/>
            <person name="Almeida J.P."/>
            <person name="Ambrose K.D."/>
            <person name="Anderson F."/>
            <person name="Andrew R.W."/>
            <person name="Ashwell R.I.S."/>
            <person name="Aubin K."/>
            <person name="Babbage A.K."/>
            <person name="Bagguley C.L."/>
            <person name="Bailey J."/>
            <person name="Beasley H."/>
            <person name="Bethel G."/>
            <person name="Bird C.P."/>
            <person name="Bray-Allen S."/>
            <person name="Brown J.Y."/>
            <person name="Brown A.J."/>
            <person name="Buckley D."/>
            <person name="Burton J."/>
            <person name="Bye J."/>
            <person name="Carder C."/>
            <person name="Chapman J.C."/>
            <person name="Clark S.Y."/>
            <person name="Clarke G."/>
            <person name="Clee C."/>
            <person name="Cobley V."/>
            <person name="Collier R.E."/>
            <person name="Corby N."/>
            <person name="Coville G.J."/>
            <person name="Davies J."/>
            <person name="Deadman R."/>
            <person name="Dunn M."/>
            <person name="Earthrowl M."/>
            <person name="Ellington A.G."/>
            <person name="Errington H."/>
            <person name="Frankish A."/>
            <person name="Frankland J."/>
            <person name="French L."/>
            <person name="Garner P."/>
            <person name="Garnett J."/>
            <person name="Gay L."/>
            <person name="Ghori M.R.J."/>
            <person name="Gibson R."/>
            <person name="Gilby L.M."/>
            <person name="Gillett W."/>
            <person name="Glithero R.J."/>
            <person name="Grafham D.V."/>
            <person name="Griffiths C."/>
            <person name="Griffiths-Jones S."/>
            <person name="Grocock R."/>
            <person name="Hammond S."/>
            <person name="Harrison E.S.I."/>
            <person name="Hart E."/>
            <person name="Haugen E."/>
            <person name="Heath P.D."/>
            <person name="Holmes S."/>
            <person name="Holt K."/>
            <person name="Howden P.J."/>
            <person name="Hunt A.R."/>
            <person name="Hunt S.E."/>
            <person name="Hunter G."/>
            <person name="Isherwood J."/>
            <person name="James R."/>
            <person name="Johnson C."/>
            <person name="Johnson D."/>
            <person name="Joy A."/>
            <person name="Kay M."/>
            <person name="Kershaw J.K."/>
            <person name="Kibukawa M."/>
            <person name="Kimberley A.M."/>
            <person name="King A."/>
            <person name="Knights A.J."/>
            <person name="Lad H."/>
            <person name="Laird G."/>
            <person name="Lawlor S."/>
            <person name="Leongamornlert D.A."/>
            <person name="Lloyd D.M."/>
            <person name="Loveland J."/>
            <person name="Lovell J."/>
            <person name="Lush M.J."/>
            <person name="Lyne R."/>
            <person name="Martin S."/>
            <person name="Mashreghi-Mohammadi M."/>
            <person name="Matthews L."/>
            <person name="Matthews N.S.W."/>
            <person name="McLaren S."/>
            <person name="Milne S."/>
            <person name="Mistry S."/>
            <person name="Moore M.J.F."/>
            <person name="Nickerson T."/>
            <person name="O'Dell C.N."/>
            <person name="Oliver K."/>
            <person name="Palmeiri A."/>
            <person name="Palmer S.A."/>
            <person name="Parker A."/>
            <person name="Patel D."/>
            <person name="Pearce A.V."/>
            <person name="Peck A.I."/>
            <person name="Pelan S."/>
            <person name="Phelps K."/>
            <person name="Phillimore B.J."/>
            <person name="Plumb R."/>
            <person name="Rajan J."/>
            <person name="Raymond C."/>
            <person name="Rouse G."/>
            <person name="Saenphimmachak C."/>
            <person name="Sehra H.K."/>
            <person name="Sheridan E."/>
            <person name="Shownkeen R."/>
            <person name="Sims S."/>
            <person name="Skuce C.D."/>
            <person name="Smith M."/>
            <person name="Steward C."/>
            <person name="Subramanian S."/>
            <person name="Sycamore N."/>
            <person name="Tracey A."/>
            <person name="Tromans A."/>
            <person name="Van Helmond Z."/>
            <person name="Wall M."/>
            <person name="Wallis J.M."/>
            <person name="White S."/>
            <person name="Whitehead S.L."/>
            <person name="Wilkinson J.E."/>
            <person name="Willey D.L."/>
            <person name="Williams H."/>
            <person name="Wilming L."/>
            <person name="Wray P.W."/>
            <person name="Wu Z."/>
            <person name="Coulson A."/>
            <person name="Vaudin M."/>
            <person name="Sulston J.E."/>
            <person name="Durbin R.M."/>
            <person name="Hubbard T."/>
            <person name="Wooster R."/>
            <person name="Dunham I."/>
            <person name="Carter N.P."/>
            <person name="McVean G."/>
            <person name="Ross M.T."/>
            <person name="Harrow J."/>
            <person name="Olson M.V."/>
            <person name="Beck S."/>
            <person name="Rogers J."/>
            <person name="Bentley D.R."/>
        </authorList>
    </citation>
    <scope>NUCLEOTIDE SEQUENCE [LARGE SCALE GENOMIC DNA]</scope>
</reference>
<reference key="7">
    <citation type="journal article" date="2004" name="Genome Res.">
        <title>The status, quality, and expansion of the NIH full-length cDNA project: the Mammalian Gene Collection (MGC).</title>
        <authorList>
            <consortium name="The MGC Project Team"/>
        </authorList>
    </citation>
    <scope>NUCLEOTIDE SEQUENCE [LARGE SCALE MRNA] (ISOFORM 3)</scope>
    <scope>NUCLEOTIDE SEQUENCE [LARGE SCALE MRNA] OF 1-651 (ISOFORM 2)</scope>
    <scope>NUCLEOTIDE SEQUENCE [LARGE SCALE MRNA] OF 1-424</scope>
    <source>
        <tissue>Hippocampus</tissue>
        <tissue>Kidney</tissue>
        <tissue>Lung</tissue>
    </source>
</reference>
<reference key="8">
    <citation type="journal article" date="2007" name="BMC Genomics">
        <title>The full-ORF clone resource of the German cDNA consortium.</title>
        <authorList>
            <person name="Bechtel S."/>
            <person name="Rosenfelder H."/>
            <person name="Duda A."/>
            <person name="Schmidt C.P."/>
            <person name="Ernst U."/>
            <person name="Wellenreuther R."/>
            <person name="Mehrle A."/>
            <person name="Schuster C."/>
            <person name="Bahr A."/>
            <person name="Bloecker H."/>
            <person name="Heubner D."/>
            <person name="Hoerlein A."/>
            <person name="Michel G."/>
            <person name="Wedler H."/>
            <person name="Koehrer K."/>
            <person name="Ottenwaelder B."/>
            <person name="Poustka A."/>
            <person name="Wiemann S."/>
            <person name="Schupp I."/>
        </authorList>
    </citation>
    <scope>NUCLEOTIDE SEQUENCE [LARGE SCALE MRNA] OF 1-1149 (ISOFORM 2)</scope>
    <scope>NUCLEOTIDE SEQUENCE [LARGE SCALE MRNA] OF 1147-1312</scope>
    <source>
        <tissue>Adipose tissue</tissue>
        <tissue>Testis</tissue>
    </source>
</reference>
<reference key="9">
    <citation type="submission" date="2000-01" db="EMBL/GenBank/DDBJ databases">
        <title>Human breast carcinoma-associated antigen isoform I.</title>
        <authorList>
            <person name="Cao J."/>
            <person name="Irie R.F."/>
            <person name="Stanbridge E.J."/>
        </authorList>
    </citation>
    <scope>NUCLEOTIDE SEQUENCE [MRNA] OF 440-1312 (ISOFORM 1)</scope>
</reference>
<reference key="10">
    <citation type="submission" date="1998-08" db="EMBL/GenBank/DDBJ databases">
        <title>Human Rb binding protein homolog gene, partial CDS.</title>
        <authorList>
            <person name="Liu T."/>
            <person name="Tao J."/>
            <person name="Zhang J."/>
            <person name="Li W."/>
            <person name="Ye M."/>
            <person name="Zhou J."/>
            <person name="Wu J."/>
            <person name="Shen Y."/>
            <person name="Yu M."/>
            <person name="Chen S."/>
            <person name="Mao M."/>
            <person name="Chen Z."/>
        </authorList>
    </citation>
    <scope>NUCLEOTIDE SEQUENCE [LARGE SCALE MRNA] OF 547-1312</scope>
</reference>
<reference key="11">
    <citation type="journal article" date="2004" name="Nat. Genet.">
        <title>Complete sequencing and characterization of 21,243 full-length human cDNAs.</title>
        <authorList>
            <person name="Ota T."/>
            <person name="Suzuki Y."/>
            <person name="Nishikawa T."/>
            <person name="Otsuki T."/>
            <person name="Sugiyama T."/>
            <person name="Irie R."/>
            <person name="Wakamatsu A."/>
            <person name="Hayashi K."/>
            <person name="Sato H."/>
            <person name="Nagai K."/>
            <person name="Kimura K."/>
            <person name="Makita H."/>
            <person name="Sekine M."/>
            <person name="Obayashi M."/>
            <person name="Nishi T."/>
            <person name="Shibahara T."/>
            <person name="Tanaka T."/>
            <person name="Ishii S."/>
            <person name="Yamamoto J."/>
            <person name="Saito K."/>
            <person name="Kawai Y."/>
            <person name="Isono Y."/>
            <person name="Nakamura Y."/>
            <person name="Nagahari K."/>
            <person name="Murakami K."/>
            <person name="Yasuda T."/>
            <person name="Iwayanagi T."/>
            <person name="Wagatsuma M."/>
            <person name="Shiratori A."/>
            <person name="Sudo H."/>
            <person name="Hosoiri T."/>
            <person name="Kaku Y."/>
            <person name="Kodaira H."/>
            <person name="Kondo H."/>
            <person name="Sugawara M."/>
            <person name="Takahashi M."/>
            <person name="Kanda K."/>
            <person name="Yokoi T."/>
            <person name="Furuya T."/>
            <person name="Kikkawa E."/>
            <person name="Omura Y."/>
            <person name="Abe K."/>
            <person name="Kamihara K."/>
            <person name="Katsuta N."/>
            <person name="Sato K."/>
            <person name="Tanikawa M."/>
            <person name="Yamazaki M."/>
            <person name="Ninomiya K."/>
            <person name="Ishibashi T."/>
            <person name="Yamashita H."/>
            <person name="Murakawa K."/>
            <person name="Fujimori K."/>
            <person name="Tanai H."/>
            <person name="Kimata M."/>
            <person name="Watanabe M."/>
            <person name="Hiraoka S."/>
            <person name="Chiba Y."/>
            <person name="Ishida S."/>
            <person name="Ono Y."/>
            <person name="Takiguchi S."/>
            <person name="Watanabe S."/>
            <person name="Yosida M."/>
            <person name="Hotuta T."/>
            <person name="Kusano J."/>
            <person name="Kanehori K."/>
            <person name="Takahashi-Fujii A."/>
            <person name="Hara H."/>
            <person name="Tanase T.-O."/>
            <person name="Nomura Y."/>
            <person name="Togiya S."/>
            <person name="Komai F."/>
            <person name="Hara R."/>
            <person name="Takeuchi K."/>
            <person name="Arita M."/>
            <person name="Imose N."/>
            <person name="Musashino K."/>
            <person name="Yuuki H."/>
            <person name="Oshima A."/>
            <person name="Sasaki N."/>
            <person name="Aotsuka S."/>
            <person name="Yoshikawa Y."/>
            <person name="Matsunawa H."/>
            <person name="Ichihara T."/>
            <person name="Shiohata N."/>
            <person name="Sano S."/>
            <person name="Moriya S."/>
            <person name="Momiyama H."/>
            <person name="Satoh N."/>
            <person name="Takami S."/>
            <person name="Terashima Y."/>
            <person name="Suzuki O."/>
            <person name="Nakagawa S."/>
            <person name="Senoh A."/>
            <person name="Mizoguchi H."/>
            <person name="Goto Y."/>
            <person name="Shimizu F."/>
            <person name="Wakebe H."/>
            <person name="Hishigaki H."/>
            <person name="Watanabe T."/>
            <person name="Sugiyama A."/>
            <person name="Takemoto M."/>
            <person name="Kawakami B."/>
            <person name="Yamazaki M."/>
            <person name="Watanabe K."/>
            <person name="Kumagai A."/>
            <person name="Itakura S."/>
            <person name="Fukuzumi Y."/>
            <person name="Fujimori Y."/>
            <person name="Komiyama M."/>
            <person name="Tashiro H."/>
            <person name="Tanigami A."/>
            <person name="Fujiwara T."/>
            <person name="Ono T."/>
            <person name="Yamada K."/>
            <person name="Fujii Y."/>
            <person name="Ozaki K."/>
            <person name="Hirao M."/>
            <person name="Ohmori Y."/>
            <person name="Kawabata A."/>
            <person name="Hikiji T."/>
            <person name="Kobatake N."/>
            <person name="Inagaki H."/>
            <person name="Ikema Y."/>
            <person name="Okamoto S."/>
            <person name="Okitani R."/>
            <person name="Kawakami T."/>
            <person name="Noguchi S."/>
            <person name="Itoh T."/>
            <person name="Shigeta K."/>
            <person name="Senba T."/>
            <person name="Matsumura K."/>
            <person name="Nakajima Y."/>
            <person name="Mizuno T."/>
            <person name="Morinaga M."/>
            <person name="Sasaki M."/>
            <person name="Togashi T."/>
            <person name="Oyama M."/>
            <person name="Hata H."/>
            <person name="Watanabe M."/>
            <person name="Komatsu T."/>
            <person name="Mizushima-Sugano J."/>
            <person name="Satoh T."/>
            <person name="Shirai Y."/>
            <person name="Takahashi Y."/>
            <person name="Nakagawa K."/>
            <person name="Okumura K."/>
            <person name="Nagase T."/>
            <person name="Nomura N."/>
            <person name="Kikuchi H."/>
            <person name="Masuho Y."/>
            <person name="Yamashita R."/>
            <person name="Nakai K."/>
            <person name="Yada T."/>
            <person name="Nakamura Y."/>
            <person name="Ohara O."/>
            <person name="Isogai T."/>
            <person name="Sugano S."/>
        </authorList>
    </citation>
    <scope>NUCLEOTIDE SEQUENCE [LARGE SCALE MRNA] OF 828-1312</scope>
</reference>
<reference key="12">
    <citation type="journal article" date="2006" name="Cell">
        <title>Global, in vivo, and site-specific phosphorylation dynamics in signaling networks.</title>
        <authorList>
            <person name="Olsen J.V."/>
            <person name="Blagoev B."/>
            <person name="Gnad F."/>
            <person name="Macek B."/>
            <person name="Kumar C."/>
            <person name="Mortensen P."/>
            <person name="Mann M."/>
        </authorList>
    </citation>
    <scope>PHOSPHORYLATION [LARGE SCALE ANALYSIS] AT SER-717</scope>
    <scope>IDENTIFICATION BY MASS SPECTROMETRY [LARGE SCALE ANALYSIS]</scope>
    <source>
        <tissue>Cervix carcinoma</tissue>
    </source>
</reference>
<reference key="13">
    <citation type="journal article" date="2006" name="Genes Dev.">
        <title>Deficiency of Rbbp1/Arid4a and Rbbp1l1/Arid4b alters epigenetic modifications and suppresses an imprinting defect in the PWS/AS domain.</title>
        <authorList>
            <person name="Wu M.Y."/>
            <person name="Tsai T.F."/>
            <person name="Beaudet A.L."/>
        </authorList>
    </citation>
    <scope>INTERACTION WITH ARID4A</scope>
</reference>
<reference key="14">
    <citation type="journal article" date="2008" name="Proc. Natl. Acad. Sci. U.S.A.">
        <title>A quantitative atlas of mitotic phosphorylation.</title>
        <authorList>
            <person name="Dephoure N."/>
            <person name="Zhou C."/>
            <person name="Villen J."/>
            <person name="Beausoleil S.A."/>
            <person name="Bakalarski C.E."/>
            <person name="Elledge S.J."/>
            <person name="Gygi S.P."/>
        </authorList>
    </citation>
    <scope>PHOSPHORYLATION [LARGE SCALE ANALYSIS] AT SER-666; SER-675; SER-790; THR-793; THR-1150; SER-1152; SER-1153; SER-1155 AND SER-1159</scope>
    <scope>IDENTIFICATION BY MASS SPECTROMETRY [LARGE SCALE ANALYSIS]</scope>
    <source>
        <tissue>Cervix carcinoma</tissue>
    </source>
</reference>
<reference key="15">
    <citation type="journal article" date="2009" name="Anal. Chem.">
        <title>Lys-N and trypsin cover complementary parts of the phosphoproteome in a refined SCX-based approach.</title>
        <authorList>
            <person name="Gauci S."/>
            <person name="Helbig A.O."/>
            <person name="Slijper M."/>
            <person name="Krijgsveld J."/>
            <person name="Heck A.J."/>
            <person name="Mohammed S."/>
        </authorList>
    </citation>
    <scope>IDENTIFICATION BY MASS SPECTROMETRY [LARGE SCALE ANALYSIS]</scope>
</reference>
<reference key="16">
    <citation type="journal article" date="2009" name="Sci. Signal.">
        <title>Quantitative phosphoproteomic analysis of T cell receptor signaling reveals system-wide modulation of protein-protein interactions.</title>
        <authorList>
            <person name="Mayya V."/>
            <person name="Lundgren D.H."/>
            <person name="Hwang S.-I."/>
            <person name="Rezaul K."/>
            <person name="Wu L."/>
            <person name="Eng J.K."/>
            <person name="Rodionov V."/>
            <person name="Han D.K."/>
        </authorList>
    </citation>
    <scope>PHOSPHORYLATION [LARGE SCALE ANALYSIS] AT SER-790; THR-793; SER-1014 AND THR-1026</scope>
    <scope>IDENTIFICATION BY MASS SPECTROMETRY [LARGE SCALE ANALYSIS]</scope>
    <source>
        <tissue>Leukemic T-cell</tissue>
    </source>
</reference>
<reference key="17">
    <citation type="journal article" date="2010" name="Sci. Signal.">
        <title>Quantitative phosphoproteomics reveals widespread full phosphorylation site occupancy during mitosis.</title>
        <authorList>
            <person name="Olsen J.V."/>
            <person name="Vermeulen M."/>
            <person name="Santamaria A."/>
            <person name="Kumar C."/>
            <person name="Miller M.L."/>
            <person name="Jensen L.J."/>
            <person name="Gnad F."/>
            <person name="Cox J."/>
            <person name="Jensen T.S."/>
            <person name="Nigg E.A."/>
            <person name="Brunak S."/>
            <person name="Mann M."/>
        </authorList>
    </citation>
    <scope>PHOSPHORYLATION [LARGE SCALE ANALYSIS] AT SER-675; SER-778; SER-790 AND THR-793</scope>
    <scope>IDENTIFICATION BY MASS SPECTROMETRY [LARGE SCALE ANALYSIS]</scope>
    <source>
        <tissue>Cervix carcinoma</tissue>
    </source>
</reference>
<reference key="18">
    <citation type="journal article" date="2011" name="BMC Syst. Biol.">
        <title>Initial characterization of the human central proteome.</title>
        <authorList>
            <person name="Burkard T.R."/>
            <person name="Planyavsky M."/>
            <person name="Kaupe I."/>
            <person name="Breitwieser F.P."/>
            <person name="Buerckstuemmer T."/>
            <person name="Bennett K.L."/>
            <person name="Superti-Furga G."/>
            <person name="Colinge J."/>
        </authorList>
    </citation>
    <scope>IDENTIFICATION BY MASS SPECTROMETRY [LARGE SCALE ANALYSIS]</scope>
</reference>
<reference key="19">
    <citation type="journal article" date="2011" name="Sci. Signal.">
        <title>System-wide temporal characterization of the proteome and phosphoproteome of human embryonic stem cell differentiation.</title>
        <authorList>
            <person name="Rigbolt K.T."/>
            <person name="Prokhorova T.A."/>
            <person name="Akimov V."/>
            <person name="Henningsen J."/>
            <person name="Johansen P.T."/>
            <person name="Kratchmarova I."/>
            <person name="Kassem M."/>
            <person name="Mann M."/>
            <person name="Olsen J.V."/>
            <person name="Blagoev B."/>
        </authorList>
    </citation>
    <scope>PHOSPHORYLATION [LARGE SCALE ANALYSIS] AT SER-276; SER-778; SER-790 AND THR-793</scope>
    <scope>IDENTIFICATION BY MASS SPECTROMETRY [LARGE SCALE ANALYSIS]</scope>
</reference>
<reference key="20">
    <citation type="journal article" date="2013" name="J. Proteome Res.">
        <title>Toward a comprehensive characterization of a human cancer cell phosphoproteome.</title>
        <authorList>
            <person name="Zhou H."/>
            <person name="Di Palma S."/>
            <person name="Preisinger C."/>
            <person name="Peng M."/>
            <person name="Polat A.N."/>
            <person name="Heck A.J."/>
            <person name="Mohammed S."/>
        </authorList>
    </citation>
    <scope>PHOSPHORYLATION [LARGE SCALE ANALYSIS] AT SER-483; SER-666; SER-675; SER-778; SER-1029 AND SER-1153</scope>
    <scope>IDENTIFICATION BY MASS SPECTROMETRY [LARGE SCALE ANALYSIS]</scope>
    <source>
        <tissue>Cervix carcinoma</tissue>
        <tissue>Erythroleukemia</tissue>
    </source>
</reference>
<reference key="21">
    <citation type="journal article" date="2014" name="Nat. Struct. Mol. Biol.">
        <title>Uncovering global SUMOylation signaling networks in a site-specific manner.</title>
        <authorList>
            <person name="Hendriks I.A."/>
            <person name="D'Souza R.C."/>
            <person name="Yang B."/>
            <person name="Verlaan-de Vries M."/>
            <person name="Mann M."/>
            <person name="Vertegaal A.C."/>
        </authorList>
    </citation>
    <scope>SUMOYLATION [LARGE SCALE ANALYSIS] AT LYS-429</scope>
    <scope>IDENTIFICATION BY MASS SPECTROMETRY [LARGE SCALE ANALYSIS]</scope>
</reference>
<reference key="22">
    <citation type="journal article" date="2015" name="Cell Rep.">
        <title>SUMO-2 orchestrates chromatin modifiers in response to DNA damage.</title>
        <authorList>
            <person name="Hendriks I.A."/>
            <person name="Treffers L.W."/>
            <person name="Verlaan-de Vries M."/>
            <person name="Olsen J.V."/>
            <person name="Vertegaal A.C."/>
        </authorList>
    </citation>
    <scope>SUMOYLATION [LARGE SCALE ANALYSIS] AT LYS-429</scope>
    <scope>IDENTIFICATION BY MASS SPECTROMETRY [LARGE SCALE ANALYSIS]</scope>
</reference>
<reference key="23">
    <citation type="journal article" date="2015" name="Mol. Cell. Proteomics">
        <title>System-wide analysis of SUMOylation dynamics in response to replication stress reveals novel small ubiquitin-like modified target proteins and acceptor lysines relevant for genome stability.</title>
        <authorList>
            <person name="Xiao Z."/>
            <person name="Chang J.G."/>
            <person name="Hendriks I.A."/>
            <person name="Sigurdsson J.O."/>
            <person name="Olsen J.V."/>
            <person name="Vertegaal A.C."/>
        </authorList>
    </citation>
    <scope>SUMOYLATION [LARGE SCALE ANALYSIS] AT LYS-429 AND LYS-440</scope>
    <scope>IDENTIFICATION BY MASS SPECTROMETRY [LARGE SCALE ANALYSIS]</scope>
</reference>
<reference key="24">
    <citation type="journal article" date="2017" name="Nat. Struct. Mol. Biol.">
        <title>Site-specific mapping of the human SUMO proteome reveals co-modification with phosphorylation.</title>
        <authorList>
            <person name="Hendriks I.A."/>
            <person name="Lyon D."/>
            <person name="Young C."/>
            <person name="Jensen L.J."/>
            <person name="Vertegaal A.C."/>
            <person name="Nielsen M.L."/>
        </authorList>
    </citation>
    <scope>SUMOYLATION [LARGE SCALE ANALYSIS] AT LYS-429; LYS-440; LYS-462; LYS-517 AND LYS-751</scope>
    <scope>IDENTIFICATION BY MASS SPECTROMETRY [LARGE SCALE ANALYSIS]</scope>
</reference>
<keyword id="KW-0002">3D-structure</keyword>
<keyword id="KW-0025">Alternative splicing</keyword>
<keyword id="KW-0156">Chromatin regulator</keyword>
<keyword id="KW-0175">Coiled coil</keyword>
<keyword id="KW-0963">Cytoplasm</keyword>
<keyword id="KW-0238">DNA-binding</keyword>
<keyword id="KW-1017">Isopeptide bond</keyword>
<keyword id="KW-0539">Nucleus</keyword>
<keyword id="KW-0597">Phosphoprotein</keyword>
<keyword id="KW-1267">Proteomics identification</keyword>
<keyword id="KW-1185">Reference proteome</keyword>
<keyword id="KW-0804">Transcription</keyword>
<keyword id="KW-0805">Transcription regulation</keyword>
<keyword id="KW-0832">Ubl conjugation</keyword>
<feature type="chain" id="PRO_0000282863" description="AT-rich interactive domain-containing protein 4B">
    <location>
        <begin position="1"/>
        <end position="1312"/>
    </location>
</feature>
<feature type="domain" description="ARID" evidence="4">
    <location>
        <begin position="306"/>
        <end position="398"/>
    </location>
</feature>
<feature type="domain" description="Tudor-knot" evidence="3">
    <location>
        <begin position="572"/>
        <end position="624"/>
    </location>
</feature>
<feature type="region of interest" description="Disordered" evidence="5">
    <location>
        <begin position="124"/>
        <end position="166"/>
    </location>
</feature>
<feature type="region of interest" description="Disordered" evidence="5">
    <location>
        <begin position="266"/>
        <end position="306"/>
    </location>
</feature>
<feature type="region of interest" description="Disordered" evidence="5">
    <location>
        <begin position="458"/>
        <end position="577"/>
    </location>
</feature>
<feature type="region of interest" description="Antigenic epitope">
    <location>
        <begin position="465"/>
        <end position="473"/>
    </location>
</feature>
<feature type="region of interest" description="Disordered" evidence="5">
    <location>
        <begin position="635"/>
        <end position="680"/>
    </location>
</feature>
<feature type="region of interest" description="Disordered" evidence="5">
    <location>
        <begin position="708"/>
        <end position="894"/>
    </location>
</feature>
<feature type="region of interest" description="Disordered" evidence="5">
    <location>
        <begin position="909"/>
        <end position="1212"/>
    </location>
</feature>
<feature type="region of interest" description="Antigenic epitope">
    <location>
        <begin position="1130"/>
        <end position="1137"/>
    </location>
</feature>
<feature type="region of interest" description="Disordered" evidence="5">
    <location>
        <begin position="1252"/>
        <end position="1288"/>
    </location>
</feature>
<feature type="coiled-coil region" evidence="3">
    <location>
        <begin position="728"/>
        <end position="754"/>
    </location>
</feature>
<feature type="coiled-coil region" evidence="3">
    <location>
        <begin position="1231"/>
        <end position="1270"/>
    </location>
</feature>
<feature type="compositionally biased region" description="Acidic residues" evidence="5">
    <location>
        <begin position="277"/>
        <end position="305"/>
    </location>
</feature>
<feature type="compositionally biased region" description="Basic and acidic residues" evidence="5">
    <location>
        <begin position="483"/>
        <end position="496"/>
    </location>
</feature>
<feature type="compositionally biased region" description="Acidic residues" evidence="5">
    <location>
        <begin position="532"/>
        <end position="567"/>
    </location>
</feature>
<feature type="compositionally biased region" description="Basic and acidic residues" evidence="5">
    <location>
        <begin position="643"/>
        <end position="656"/>
    </location>
</feature>
<feature type="compositionally biased region" description="Basic and acidic residues" evidence="5">
    <location>
        <begin position="722"/>
        <end position="754"/>
    </location>
</feature>
<feature type="compositionally biased region" description="Basic and acidic residues" evidence="5">
    <location>
        <begin position="778"/>
        <end position="787"/>
    </location>
</feature>
<feature type="compositionally biased region" description="Acidic residues" evidence="5">
    <location>
        <begin position="788"/>
        <end position="799"/>
    </location>
</feature>
<feature type="compositionally biased region" description="Basic and acidic residues" evidence="5">
    <location>
        <begin position="807"/>
        <end position="816"/>
    </location>
</feature>
<feature type="compositionally biased region" description="Basic and acidic residues" evidence="5">
    <location>
        <begin position="828"/>
        <end position="852"/>
    </location>
</feature>
<feature type="compositionally biased region" description="Basic and acidic residues" evidence="5">
    <location>
        <begin position="909"/>
        <end position="927"/>
    </location>
</feature>
<feature type="compositionally biased region" description="Basic and acidic residues" evidence="5">
    <location>
        <begin position="995"/>
        <end position="1010"/>
    </location>
</feature>
<feature type="compositionally biased region" description="Low complexity" evidence="5">
    <location>
        <begin position="1028"/>
        <end position="1037"/>
    </location>
</feature>
<feature type="compositionally biased region" description="Polar residues" evidence="5">
    <location>
        <begin position="1038"/>
        <end position="1047"/>
    </location>
</feature>
<feature type="compositionally biased region" description="Basic and acidic residues" evidence="5">
    <location>
        <begin position="1056"/>
        <end position="1065"/>
    </location>
</feature>
<feature type="compositionally biased region" description="Low complexity" evidence="5">
    <location>
        <begin position="1087"/>
        <end position="1101"/>
    </location>
</feature>
<feature type="compositionally biased region" description="Basic residues" evidence="5">
    <location>
        <begin position="1130"/>
        <end position="1148"/>
    </location>
</feature>
<feature type="compositionally biased region" description="Polar residues" evidence="5">
    <location>
        <begin position="1162"/>
        <end position="1191"/>
    </location>
</feature>
<feature type="compositionally biased region" description="Basic and acidic residues" evidence="5">
    <location>
        <begin position="1196"/>
        <end position="1208"/>
    </location>
</feature>
<feature type="compositionally biased region" description="Low complexity" evidence="5">
    <location>
        <begin position="1272"/>
        <end position="1288"/>
    </location>
</feature>
<feature type="modified residue" description="Phosphoserine" evidence="20">
    <location>
        <position position="276"/>
    </location>
</feature>
<feature type="modified residue" description="Phosphoserine" evidence="2">
    <location>
        <position position="295"/>
    </location>
</feature>
<feature type="modified residue" description="Phosphoserine" evidence="2">
    <location>
        <position position="296"/>
    </location>
</feature>
<feature type="modified residue" description="Phosphoserine" evidence="21">
    <location>
        <position position="483"/>
    </location>
</feature>
<feature type="modified residue" description="Phosphoserine" evidence="17 21">
    <location>
        <position position="666"/>
    </location>
</feature>
<feature type="modified residue" description="Phosphoserine" evidence="17 19 21">
    <location>
        <position position="675"/>
    </location>
</feature>
<feature type="modified residue" description="Phosphoserine" evidence="16">
    <location>
        <position position="717"/>
    </location>
</feature>
<feature type="modified residue" description="Phosphoserine" evidence="19 20 21">
    <location>
        <position position="778"/>
    </location>
</feature>
<feature type="modified residue" description="Phosphoserine" evidence="17 18 19 20">
    <location>
        <position position="790"/>
    </location>
</feature>
<feature type="modified residue" description="Phosphothreonine" evidence="17 18 19 20">
    <location>
        <position position="793"/>
    </location>
</feature>
<feature type="modified residue" description="Phosphoserine" evidence="18">
    <location>
        <position position="1014"/>
    </location>
</feature>
<feature type="modified residue" description="Phosphothreonine" evidence="18">
    <location>
        <position position="1026"/>
    </location>
</feature>
<feature type="modified residue" description="Phosphoserine" evidence="21">
    <location>
        <position position="1029"/>
    </location>
</feature>
<feature type="modified residue" description="Phosphothreonine" evidence="17">
    <location>
        <position position="1150"/>
    </location>
</feature>
<feature type="modified residue" description="Phosphoserine" evidence="17">
    <location>
        <position position="1152"/>
    </location>
</feature>
<feature type="modified residue" description="Phosphoserine" evidence="17 21">
    <location>
        <position position="1153"/>
    </location>
</feature>
<feature type="modified residue" description="Phosphoserine" evidence="17">
    <location>
        <position position="1155"/>
    </location>
</feature>
<feature type="modified residue" description="Phosphoserine" evidence="17">
    <location>
        <position position="1159"/>
    </location>
</feature>
<feature type="cross-link" description="Glycyl lysine isopeptide (Lys-Gly) (interchain with G-Cter in SUMO2)" evidence="22 23 24 25">
    <location>
        <position position="429"/>
    </location>
</feature>
<feature type="cross-link" description="Glycyl lysine isopeptide (Lys-Gly) (interchain with G-Cter in SUMO2)" evidence="23 25">
    <location>
        <position position="440"/>
    </location>
</feature>
<feature type="cross-link" description="Glycyl lysine isopeptide (Lys-Gly) (interchain with G-Cter in SUMO2)" evidence="25">
    <location>
        <position position="462"/>
    </location>
</feature>
<feature type="cross-link" description="Glycyl lysine isopeptide (Lys-Gly) (interchain with G-Cter in SUMO2)" evidence="25">
    <location>
        <position position="517"/>
    </location>
</feature>
<feature type="cross-link" description="Glycyl lysine isopeptide (Lys-Gly) (interchain with G-Cter in SUMO2)" evidence="25">
    <location>
        <position position="751"/>
    </location>
</feature>
<feature type="splice variant" id="VSP_024230" description="In isoform 4." evidence="14">
    <location>
        <begin position="1"/>
        <end position="319"/>
    </location>
</feature>
<feature type="splice variant" id="VSP_024231" description="In isoform 2." evidence="10 11 12 13">
    <location>
        <begin position="529"/>
        <end position="614"/>
    </location>
</feature>
<feature type="splice variant" id="VSP_024232" description="In isoform 4." evidence="14">
    <original>ACTGQKRVKDA</original>
    <variation>GEKENVYVDLF</variation>
    <location>
        <begin position="1112"/>
        <end position="1122"/>
    </location>
</feature>
<feature type="splice variant" id="VSP_024233" description="In isoform 4." evidence="14">
    <location>
        <begin position="1123"/>
        <end position="1312"/>
    </location>
</feature>
<feature type="splice variant" id="VSP_024234" description="In isoform 3." evidence="12">
    <original>TNSS</original>
    <variation>SAPH</variation>
    <location>
        <begin position="1150"/>
        <end position="1153"/>
    </location>
</feature>
<feature type="splice variant" id="VSP_024235" description="In isoform 3." evidence="12">
    <location>
        <begin position="1154"/>
        <end position="1312"/>
    </location>
</feature>
<feature type="sequence conflict" description="In Ref. 2; AAO63590." evidence="15" ref="2">
    <original>D</original>
    <variation>G</variation>
    <location>
        <position position="15"/>
    </location>
</feature>
<feature type="sequence conflict" description="In Ref. 2; AAO63590." evidence="15" ref="2">
    <original>V</original>
    <variation>A</variation>
    <location>
        <position position="79"/>
    </location>
</feature>
<feature type="sequence conflict" description="In Ref. 1; AAF28341 and 3; AAF23433." evidence="15" ref="1 3">
    <original>R</original>
    <variation>Q</variation>
    <location>
        <position position="330"/>
    </location>
</feature>
<feature type="sequence conflict" description="In Ref. 4; BAA89794." evidence="15" ref="4">
    <original>A</original>
    <variation>P</variation>
    <location>
        <position position="400"/>
    </location>
</feature>
<feature type="sequence conflict" description="In Ref. 3; AAF23433." evidence="15" ref="3">
    <original>I</original>
    <variation>IEFCGR</variation>
    <location>
        <position position="436"/>
    </location>
</feature>
<feature type="sequence conflict" description="In Ref. 4; BAA89794." evidence="15" ref="4">
    <original>K</original>
    <variation>Q</variation>
    <location>
        <position position="437"/>
    </location>
</feature>
<feature type="sequence conflict" description="In Ref. 4; BAA89794." evidence="15" ref="4">
    <original>DNN</original>
    <variation>ATI</variation>
    <location>
        <begin position="559"/>
        <end position="561"/>
    </location>
</feature>
<feature type="sequence conflict" description="In Ref. 4; BAA89794." evidence="15" ref="4">
    <original>C</original>
    <variation>S</variation>
    <location>
        <position position="568"/>
    </location>
</feature>
<feature type="sequence conflict" description="In Ref. 4; BAA89794." evidence="15" ref="4">
    <original>V</original>
    <variation>A</variation>
    <location>
        <position position="575"/>
    </location>
</feature>
<feature type="sequence conflict" description="In Ref. 4; BAA89794." evidence="15" ref="4">
    <original>N</original>
    <variation>H</variation>
    <location>
        <position position="584"/>
    </location>
</feature>
<feature type="sequence conflict" description="In Ref. 9; AAF36964." evidence="15" ref="9">
    <original>L</original>
    <variation>S</variation>
    <location>
        <position position="605"/>
    </location>
</feature>
<feature type="sequence conflict" description="In Ref. 9; AAF36964." evidence="15" ref="9">
    <original>D</original>
    <variation>G</variation>
    <location>
        <position position="616"/>
    </location>
</feature>
<feature type="sequence conflict" description="In Ref. 2; AAO63590." evidence="15" ref="2">
    <original>D</original>
    <variation>G</variation>
    <location>
        <position position="813"/>
    </location>
</feature>
<feature type="sequence conflict" description="In Ref. 3; AAF23433." evidence="15" ref="3">
    <original>RLQ</original>
    <variation>LP</variation>
    <location>
        <begin position="915"/>
        <end position="917"/>
    </location>
</feature>
<feature type="sequence conflict" description="In Ref. 3; AAF23433." evidence="15" ref="3">
    <original>L</original>
    <variation>R</variation>
    <location>
        <position position="940"/>
    </location>
</feature>
<feature type="sequence conflict" description="In Ref. 1; AAF28341 and 9; AAF36964." evidence="15" ref="1 9">
    <original>K</original>
    <variation>E</variation>
    <location>
        <position position="1000"/>
    </location>
</feature>
<feature type="sequence conflict" description="In Ref. 3; AAF23433." evidence="15" ref="3">
    <original>T</original>
    <variation>Q</variation>
    <location>
        <position position="1001"/>
    </location>
</feature>
<feature type="sequence conflict" description="In Ref. 2; AAO63590." evidence="15" ref="2">
    <original>S</original>
    <variation>P</variation>
    <location>
        <position position="1032"/>
    </location>
</feature>
<feature type="sequence conflict" description="In Ref. 2; AAO63590." evidence="15" ref="2">
    <original>S</original>
    <variation>N</variation>
    <location>
        <position position="1087"/>
    </location>
</feature>
<feature type="sequence conflict" description="In Ref. 8; CAI46047." evidence="15" ref="8">
    <original>R</original>
    <variation>G</variation>
    <location>
        <position position="1118"/>
    </location>
</feature>
<feature type="sequence conflict" description="In Ref. 3; AAF23433 and 10; AAD41239." evidence="15" ref="3 10">
    <original>K</original>
    <variation>T</variation>
    <location>
        <position position="1144"/>
    </location>
</feature>
<feature type="sequence conflict" description="In Ref. 3; AAF23433 and 10; AAD41239." evidence="15" ref="3 10">
    <original>IR</original>
    <variation>NQ</variation>
    <location>
        <begin position="1243"/>
        <end position="1244"/>
    </location>
</feature>
<feature type="sequence conflict" description="In Ref. 1; AAF28341 and 9; AAF36964." evidence="15" ref="1 9">
    <original>V</original>
    <variation>A</variation>
    <location>
        <position position="1290"/>
    </location>
</feature>
<feature type="strand" evidence="26">
    <location>
        <begin position="15"/>
        <end position="20"/>
    </location>
</feature>
<feature type="strand" evidence="26">
    <location>
        <begin position="23"/>
        <end position="42"/>
    </location>
</feature>
<feature type="turn" evidence="26">
    <location>
        <begin position="43"/>
        <end position="45"/>
    </location>
</feature>
<feature type="strand" evidence="26">
    <location>
        <begin position="48"/>
        <end position="52"/>
    </location>
</feature>
<feature type="helix" evidence="26">
    <location>
        <begin position="53"/>
        <end position="55"/>
    </location>
</feature>
<feature type="strand" evidence="26">
    <location>
        <begin position="56"/>
        <end position="58"/>
    </location>
</feature>
<feature type="strand" evidence="26">
    <location>
        <begin position="65"/>
        <end position="69"/>
    </location>
</feature>
<feature type="strand" evidence="26">
    <location>
        <begin position="75"/>
        <end position="92"/>
    </location>
</feature>
<feature type="strand" evidence="26">
    <location>
        <begin position="98"/>
        <end position="102"/>
    </location>
</feature>
<feature type="helix" evidence="26">
    <location>
        <begin position="103"/>
        <end position="105"/>
    </location>
</feature>
<feature type="strand" evidence="26">
    <location>
        <begin position="106"/>
        <end position="111"/>
    </location>
</feature>
<feature type="strand" evidence="26">
    <location>
        <begin position="133"/>
        <end position="136"/>
    </location>
</feature>
<feature type="turn" evidence="26">
    <location>
        <begin position="146"/>
        <end position="148"/>
    </location>
</feature>
<name>ARI4B_HUMAN</name>
<proteinExistence type="evidence at protein level"/>
<gene>
    <name type="primary">ARID4B</name>
    <name type="synonym">BRCAA1</name>
    <name type="synonym">RBBP1L1</name>
    <name type="synonym">RBP1L1</name>
    <name type="synonym">SAP180</name>
</gene>
<evidence type="ECO:0000250" key="1">
    <source>
        <dbReference type="UniProtKB" id="A2CG63"/>
    </source>
</evidence>
<evidence type="ECO:0000250" key="2">
    <source>
        <dbReference type="UniProtKB" id="Q9JKB5"/>
    </source>
</evidence>
<evidence type="ECO:0000255" key="3"/>
<evidence type="ECO:0000255" key="4">
    <source>
        <dbReference type="PROSITE-ProRule" id="PRU00355"/>
    </source>
</evidence>
<evidence type="ECO:0000256" key="5">
    <source>
        <dbReference type="SAM" id="MobiDB-lite"/>
    </source>
</evidence>
<evidence type="ECO:0000269" key="6">
    <source>
    </source>
</evidence>
<evidence type="ECO:0000269" key="7">
    <source>
    </source>
</evidence>
<evidence type="ECO:0000269" key="8">
    <source>
    </source>
</evidence>
<evidence type="ECO:0000269" key="9">
    <source>
    </source>
</evidence>
<evidence type="ECO:0000303" key="10">
    <source>
    </source>
</evidence>
<evidence type="ECO:0000303" key="11">
    <source>
    </source>
</evidence>
<evidence type="ECO:0000303" key="12">
    <source>
    </source>
</evidence>
<evidence type="ECO:0000303" key="13">
    <source>
    </source>
</evidence>
<evidence type="ECO:0000303" key="14">
    <source ref="4"/>
</evidence>
<evidence type="ECO:0000305" key="15"/>
<evidence type="ECO:0007744" key="16">
    <source>
    </source>
</evidence>
<evidence type="ECO:0007744" key="17">
    <source>
    </source>
</evidence>
<evidence type="ECO:0007744" key="18">
    <source>
    </source>
</evidence>
<evidence type="ECO:0007744" key="19">
    <source>
    </source>
</evidence>
<evidence type="ECO:0007744" key="20">
    <source>
    </source>
</evidence>
<evidence type="ECO:0007744" key="21">
    <source>
    </source>
</evidence>
<evidence type="ECO:0007744" key="22">
    <source>
    </source>
</evidence>
<evidence type="ECO:0007744" key="23">
    <source>
    </source>
</evidence>
<evidence type="ECO:0007744" key="24">
    <source>
    </source>
</evidence>
<evidence type="ECO:0007744" key="25">
    <source>
    </source>
</evidence>
<evidence type="ECO:0007829" key="26">
    <source>
        <dbReference type="PDB" id="7DM4"/>
    </source>
</evidence>
<dbReference type="EMBL" id="AF214114">
    <property type="protein sequence ID" value="AAF28341.2"/>
    <property type="molecule type" value="mRNA"/>
</dbReference>
<dbReference type="EMBL" id="AY220790">
    <property type="protein sequence ID" value="AAO63590.1"/>
    <property type="molecule type" value="mRNA"/>
</dbReference>
<dbReference type="EMBL" id="AF208045">
    <property type="protein sequence ID" value="AAF23433.3"/>
    <property type="status" value="ALT_FRAME"/>
    <property type="molecule type" value="mRNA"/>
</dbReference>
<dbReference type="EMBL" id="AB030181">
    <property type="protein sequence ID" value="BAA89794.1"/>
    <property type="molecule type" value="mRNA"/>
</dbReference>
<dbReference type="EMBL" id="AB210032">
    <property type="protein sequence ID" value="BAE06114.1"/>
    <property type="status" value="ALT_INIT"/>
    <property type="molecule type" value="mRNA"/>
</dbReference>
<dbReference type="EMBL" id="AL133418">
    <property type="status" value="NOT_ANNOTATED_CDS"/>
    <property type="molecule type" value="Genomic_DNA"/>
</dbReference>
<dbReference type="EMBL" id="AL391994">
    <property type="status" value="NOT_ANNOTATED_CDS"/>
    <property type="molecule type" value="Genomic_DNA"/>
</dbReference>
<dbReference type="EMBL" id="BC048959">
    <property type="protein sequence ID" value="AAH48959.1"/>
    <property type="status" value="ALT_TERM"/>
    <property type="molecule type" value="mRNA"/>
</dbReference>
<dbReference type="EMBL" id="BC062536">
    <property type="protein sequence ID" value="AAH62536.1"/>
    <property type="status" value="ALT_TERM"/>
    <property type="molecule type" value="mRNA"/>
</dbReference>
<dbReference type="EMBL" id="BC104632">
    <property type="protein sequence ID" value="AAI04633.1"/>
    <property type="status" value="ALT_TERM"/>
    <property type="molecule type" value="mRNA"/>
</dbReference>
<dbReference type="EMBL" id="BC130418">
    <property type="protein sequence ID" value="AAI30419.1"/>
    <property type="molecule type" value="mRNA"/>
</dbReference>
<dbReference type="EMBL" id="BX648820">
    <property type="protein sequence ID" value="CAI46047.1"/>
    <property type="molecule type" value="mRNA"/>
</dbReference>
<dbReference type="EMBL" id="AL133594">
    <property type="protein sequence ID" value="CAB63731.1"/>
    <property type="molecule type" value="mRNA"/>
</dbReference>
<dbReference type="EMBL" id="AF227899">
    <property type="protein sequence ID" value="AAF36964.1"/>
    <property type="molecule type" value="mRNA"/>
</dbReference>
<dbReference type="EMBL" id="AF083249">
    <property type="protein sequence ID" value="AAD41239.1"/>
    <property type="status" value="ALT_FRAME"/>
    <property type="molecule type" value="mRNA"/>
</dbReference>
<dbReference type="EMBL" id="AK023144">
    <property type="protein sequence ID" value="BAB14428.1"/>
    <property type="status" value="ALT_INIT"/>
    <property type="molecule type" value="mRNA"/>
</dbReference>
<dbReference type="CCDS" id="CCDS31060.1">
    <molecule id="Q4LE39-2"/>
</dbReference>
<dbReference type="CCDS" id="CCDS31061.1">
    <molecule id="Q4LE39-1"/>
</dbReference>
<dbReference type="PIR" id="T43497">
    <property type="entry name" value="T43497"/>
</dbReference>
<dbReference type="RefSeq" id="NP_001193723.1">
    <molecule id="Q4LE39-1"/>
    <property type="nucleotide sequence ID" value="NM_001206794.2"/>
</dbReference>
<dbReference type="RefSeq" id="NP_057458.4">
    <molecule id="Q4LE39-1"/>
    <property type="nucleotide sequence ID" value="NM_016374.5"/>
</dbReference>
<dbReference type="RefSeq" id="NP_112739.2">
    <molecule id="Q4LE39-2"/>
    <property type="nucleotide sequence ID" value="NM_031371.3"/>
</dbReference>
<dbReference type="RefSeq" id="XP_011542514.1">
    <molecule id="Q4LE39-1"/>
    <property type="nucleotide sequence ID" value="XM_011544212.4"/>
</dbReference>
<dbReference type="RefSeq" id="XP_024303394.1">
    <molecule id="Q4LE39-2"/>
    <property type="nucleotide sequence ID" value="XM_024447626.2"/>
</dbReference>
<dbReference type="RefSeq" id="XP_054192975.1">
    <molecule id="Q4LE39-1"/>
    <property type="nucleotide sequence ID" value="XM_054337000.1"/>
</dbReference>
<dbReference type="RefSeq" id="XP_054192978.1">
    <molecule id="Q4LE39-2"/>
    <property type="nucleotide sequence ID" value="XM_054337003.1"/>
</dbReference>
<dbReference type="PDB" id="7DM4">
    <property type="method" value="NMR"/>
    <property type="chains" value="A=1-151"/>
</dbReference>
<dbReference type="PDBsum" id="7DM4"/>
<dbReference type="SMR" id="Q4LE39"/>
<dbReference type="BioGRID" id="119708">
    <property type="interactions" value="197"/>
</dbReference>
<dbReference type="ComplexPortal" id="CPX-3321">
    <property type="entry name" value="SIN3A histone deacetylase complex"/>
</dbReference>
<dbReference type="ComplexPortal" id="CPX-3322">
    <property type="entry name" value="SIN3B histone deacetylase complex"/>
</dbReference>
<dbReference type="ComplexPortal" id="CPX-3323">
    <property type="entry name" value="SIN3A histone deacetylase complex, ES cell-specific variant"/>
</dbReference>
<dbReference type="CORUM" id="Q4LE39"/>
<dbReference type="FunCoup" id="Q4LE39">
    <property type="interactions" value="4909"/>
</dbReference>
<dbReference type="IntAct" id="Q4LE39">
    <property type="interactions" value="113"/>
</dbReference>
<dbReference type="MINT" id="Q4LE39"/>
<dbReference type="STRING" id="9606.ENSP00000264183"/>
<dbReference type="GlyGen" id="Q4LE39">
    <property type="glycosylation" value="1 site, 1 O-linked glycan (1 site)"/>
</dbReference>
<dbReference type="iPTMnet" id="Q4LE39"/>
<dbReference type="PhosphoSitePlus" id="Q4LE39"/>
<dbReference type="BioMuta" id="ARID4B"/>
<dbReference type="DMDM" id="143955276"/>
<dbReference type="CPTAC" id="CPTAC-1754"/>
<dbReference type="jPOST" id="Q4LE39"/>
<dbReference type="MassIVE" id="Q4LE39"/>
<dbReference type="PaxDb" id="9606-ENSP00000264183"/>
<dbReference type="PeptideAtlas" id="Q4LE39"/>
<dbReference type="ProteomicsDB" id="62238">
    <molecule id="Q4LE39-1"/>
</dbReference>
<dbReference type="ProteomicsDB" id="62239">
    <molecule id="Q4LE39-2"/>
</dbReference>
<dbReference type="ProteomicsDB" id="62240">
    <molecule id="Q4LE39-3"/>
</dbReference>
<dbReference type="ProteomicsDB" id="62241">
    <molecule id="Q4LE39-4"/>
</dbReference>
<dbReference type="Pumba" id="Q4LE39"/>
<dbReference type="ABCD" id="Q4LE39">
    <property type="antibodies" value="1 sequenced antibody"/>
</dbReference>
<dbReference type="Antibodypedia" id="20807">
    <property type="antibodies" value="174 antibodies from 31 providers"/>
</dbReference>
<dbReference type="DNASU" id="51742"/>
<dbReference type="Ensembl" id="ENST00000264183.9">
    <molecule id="Q4LE39-1"/>
    <property type="protein sequence ID" value="ENSP00000264183.3"/>
    <property type="gene ID" value="ENSG00000054267.22"/>
</dbReference>
<dbReference type="Ensembl" id="ENST00000349213.7">
    <molecule id="Q4LE39-2"/>
    <property type="protein sequence ID" value="ENSP00000264184.4"/>
    <property type="gene ID" value="ENSG00000054267.22"/>
</dbReference>
<dbReference type="Ensembl" id="ENST00000366603.6">
    <molecule id="Q4LE39-1"/>
    <property type="protein sequence ID" value="ENSP00000355562.2"/>
    <property type="gene ID" value="ENSG00000054267.22"/>
</dbReference>
<dbReference type="Ensembl" id="ENST00000421364.5">
    <molecule id="Q4LE39-3"/>
    <property type="protein sequence ID" value="ENSP00000394663.1"/>
    <property type="gene ID" value="ENSG00000054267.22"/>
</dbReference>
<dbReference type="GeneID" id="51742"/>
<dbReference type="KEGG" id="hsa:51742"/>
<dbReference type="MANE-Select" id="ENST00000264183.9">
    <property type="protein sequence ID" value="ENSP00000264183.3"/>
    <property type="RefSeq nucleotide sequence ID" value="NM_016374.6"/>
    <property type="RefSeq protein sequence ID" value="NP_057458.4"/>
</dbReference>
<dbReference type="UCSC" id="uc001hwq.3">
    <molecule id="Q4LE39-1"/>
    <property type="organism name" value="human"/>
</dbReference>
<dbReference type="AGR" id="HGNC:15550"/>
<dbReference type="CTD" id="51742"/>
<dbReference type="DisGeNET" id="51742"/>
<dbReference type="GeneCards" id="ARID4B"/>
<dbReference type="HGNC" id="HGNC:15550">
    <property type="gene designation" value="ARID4B"/>
</dbReference>
<dbReference type="HPA" id="ENSG00000054267">
    <property type="expression patterns" value="Low tissue specificity"/>
</dbReference>
<dbReference type="MIM" id="609696">
    <property type="type" value="gene"/>
</dbReference>
<dbReference type="neXtProt" id="NX_Q4LE39"/>
<dbReference type="OpenTargets" id="ENSG00000054267"/>
<dbReference type="PharmGKB" id="PA134940494"/>
<dbReference type="VEuPathDB" id="HostDB:ENSG00000054267"/>
<dbReference type="eggNOG" id="KOG2744">
    <property type="taxonomic scope" value="Eukaryota"/>
</dbReference>
<dbReference type="eggNOG" id="KOG3001">
    <property type="taxonomic scope" value="Eukaryota"/>
</dbReference>
<dbReference type="GeneTree" id="ENSGT00940000158149"/>
<dbReference type="HOGENOM" id="CLU_007419_0_0_1"/>
<dbReference type="InParanoid" id="Q4LE39"/>
<dbReference type="OMA" id="XCTGQKR"/>
<dbReference type="OrthoDB" id="10068428at2759"/>
<dbReference type="PAN-GO" id="Q4LE39">
    <property type="GO annotations" value="3 GO annotations based on evolutionary models"/>
</dbReference>
<dbReference type="PhylomeDB" id="Q4LE39"/>
<dbReference type="TreeFam" id="TF106427"/>
<dbReference type="PathwayCommons" id="Q4LE39"/>
<dbReference type="Reactome" id="R-HSA-3214815">
    <property type="pathway name" value="HDACs deacetylate histones"/>
</dbReference>
<dbReference type="Reactome" id="R-HSA-427413">
    <property type="pathway name" value="NoRC negatively regulates rRNA expression"/>
</dbReference>
<dbReference type="Reactome" id="R-HSA-9679191">
    <property type="pathway name" value="Potential therapeutics for SARS"/>
</dbReference>
<dbReference type="SignaLink" id="Q4LE39"/>
<dbReference type="BioGRID-ORCS" id="51742">
    <property type="hits" value="96 hits in 1172 CRISPR screens"/>
</dbReference>
<dbReference type="ChiTaRS" id="ARID4B">
    <property type="organism name" value="human"/>
</dbReference>
<dbReference type="GeneWiki" id="ARID4B"/>
<dbReference type="GenomeRNAi" id="51742"/>
<dbReference type="Pharos" id="Q4LE39">
    <property type="development level" value="Tbio"/>
</dbReference>
<dbReference type="PRO" id="PR:Q4LE39"/>
<dbReference type="Proteomes" id="UP000005640">
    <property type="component" value="Chromosome 1"/>
</dbReference>
<dbReference type="RNAct" id="Q4LE39">
    <property type="molecule type" value="protein"/>
</dbReference>
<dbReference type="Bgee" id="ENSG00000054267">
    <property type="expression patterns" value="Expressed in choroid plexus epithelium and 200 other cell types or tissues"/>
</dbReference>
<dbReference type="ExpressionAtlas" id="Q4LE39">
    <property type="expression patterns" value="baseline and differential"/>
</dbReference>
<dbReference type="GO" id="GO:0005829">
    <property type="term" value="C:cytosol"/>
    <property type="evidence" value="ECO:0000314"/>
    <property type="project" value="HPA"/>
</dbReference>
<dbReference type="GO" id="GO:0005739">
    <property type="term" value="C:mitochondrion"/>
    <property type="evidence" value="ECO:0000314"/>
    <property type="project" value="HPA"/>
</dbReference>
<dbReference type="GO" id="GO:0005654">
    <property type="term" value="C:nucleoplasm"/>
    <property type="evidence" value="ECO:0000314"/>
    <property type="project" value="HPA"/>
</dbReference>
<dbReference type="GO" id="GO:0005634">
    <property type="term" value="C:nucleus"/>
    <property type="evidence" value="ECO:0000318"/>
    <property type="project" value="GO_Central"/>
</dbReference>
<dbReference type="GO" id="GO:0070822">
    <property type="term" value="C:Sin3-type complex"/>
    <property type="evidence" value="ECO:0000303"/>
    <property type="project" value="ComplexPortal"/>
</dbReference>
<dbReference type="GO" id="GO:0003677">
    <property type="term" value="F:DNA binding"/>
    <property type="evidence" value="ECO:0000315"/>
    <property type="project" value="DisProt"/>
</dbReference>
<dbReference type="GO" id="GO:0000976">
    <property type="term" value="F:transcription cis-regulatory region binding"/>
    <property type="evidence" value="ECO:0000318"/>
    <property type="project" value="GO_Central"/>
</dbReference>
<dbReference type="GO" id="GO:0097368">
    <property type="term" value="P:establishment of Sertoli cell barrier"/>
    <property type="evidence" value="ECO:0007669"/>
    <property type="project" value="Ensembl"/>
</dbReference>
<dbReference type="GO" id="GO:0071514">
    <property type="term" value="P:genomic imprinting"/>
    <property type="evidence" value="ECO:0007669"/>
    <property type="project" value="Ensembl"/>
</dbReference>
<dbReference type="GO" id="GO:0030336">
    <property type="term" value="P:negative regulation of cell migration"/>
    <property type="evidence" value="ECO:0000303"/>
    <property type="project" value="ComplexPortal"/>
</dbReference>
<dbReference type="GO" id="GO:1902455">
    <property type="term" value="P:negative regulation of stem cell population maintenance"/>
    <property type="evidence" value="ECO:0000303"/>
    <property type="project" value="ComplexPortal"/>
</dbReference>
<dbReference type="GO" id="GO:0000122">
    <property type="term" value="P:negative regulation of transcription by RNA polymerase II"/>
    <property type="evidence" value="ECO:0000303"/>
    <property type="project" value="ComplexPortal"/>
</dbReference>
<dbReference type="GO" id="GO:0030512">
    <property type="term" value="P:negative regulation of transforming growth factor beta receptor signaling pathway"/>
    <property type="evidence" value="ECO:0000303"/>
    <property type="project" value="ComplexPortal"/>
</dbReference>
<dbReference type="GO" id="GO:1902459">
    <property type="term" value="P:positive regulation of stem cell population maintenance"/>
    <property type="evidence" value="ECO:0000303"/>
    <property type="project" value="ComplexPortal"/>
</dbReference>
<dbReference type="GO" id="GO:0045944">
    <property type="term" value="P:positive regulation of transcription by RNA polymerase II"/>
    <property type="evidence" value="ECO:0007669"/>
    <property type="project" value="Ensembl"/>
</dbReference>
<dbReference type="GO" id="GO:0006357">
    <property type="term" value="P:regulation of transcription by RNA polymerase II"/>
    <property type="evidence" value="ECO:0000318"/>
    <property type="project" value="GO_Central"/>
</dbReference>
<dbReference type="GO" id="GO:0007283">
    <property type="term" value="P:spermatogenesis"/>
    <property type="evidence" value="ECO:0007669"/>
    <property type="project" value="Ensembl"/>
</dbReference>
<dbReference type="GO" id="GO:0006366">
    <property type="term" value="P:transcription by RNA polymerase II"/>
    <property type="evidence" value="ECO:0007669"/>
    <property type="project" value="Ensembl"/>
</dbReference>
<dbReference type="CDD" id="cd16883">
    <property type="entry name" value="ARID_ARID4B"/>
    <property type="match status" value="1"/>
</dbReference>
<dbReference type="CDD" id="cd20460">
    <property type="entry name" value="Tudor_ARID4B_rpt1"/>
    <property type="match status" value="1"/>
</dbReference>
<dbReference type="CDD" id="cd20462">
    <property type="entry name" value="Tudor_ARID4B_rpt2"/>
    <property type="match status" value="1"/>
</dbReference>
<dbReference type="FunFam" id="2.30.30.140:FF:000012">
    <property type="entry name" value="AT-rich interactive domain-containing protein 4A"/>
    <property type="match status" value="1"/>
</dbReference>
<dbReference type="FunFam" id="1.10.150.60:FF:000003">
    <property type="entry name" value="AT-rich interactive domain-containing protein 4B"/>
    <property type="match status" value="1"/>
</dbReference>
<dbReference type="FunFam" id="2.30.30.140:FF:000009">
    <property type="entry name" value="AT-rich interactive domain-containing protein 4B"/>
    <property type="match status" value="1"/>
</dbReference>
<dbReference type="FunFam" id="2.30.30.140:FF:000044">
    <property type="entry name" value="AT-rich interactive domain-containing protein 4B isoform X1"/>
    <property type="match status" value="1"/>
</dbReference>
<dbReference type="Gene3D" id="2.30.30.140">
    <property type="match status" value="3"/>
</dbReference>
<dbReference type="Gene3D" id="1.10.150.60">
    <property type="entry name" value="ARID DNA-binding domain"/>
    <property type="match status" value="1"/>
</dbReference>
<dbReference type="InterPro" id="IPR051232">
    <property type="entry name" value="ARID/SWI1_ChromRemod"/>
</dbReference>
<dbReference type="InterPro" id="IPR012603">
    <property type="entry name" value="ARID4A/B_PWWP"/>
</dbReference>
<dbReference type="InterPro" id="IPR028853">
    <property type="entry name" value="ARID4B_ARID/BRIGHT"/>
</dbReference>
<dbReference type="InterPro" id="IPR001606">
    <property type="entry name" value="ARID_dom"/>
</dbReference>
<dbReference type="InterPro" id="IPR036431">
    <property type="entry name" value="ARID_dom_sf"/>
</dbReference>
<dbReference type="InterPro" id="IPR016197">
    <property type="entry name" value="Chromo-like_dom_sf"/>
</dbReference>
<dbReference type="InterPro" id="IPR002999">
    <property type="entry name" value="Tudor"/>
</dbReference>
<dbReference type="InterPro" id="IPR025995">
    <property type="entry name" value="Tudor-knot"/>
</dbReference>
<dbReference type="InterPro" id="IPR047476">
    <property type="entry name" value="Tudor_ARID4B_rpt1"/>
</dbReference>
<dbReference type="InterPro" id="IPR047474">
    <property type="entry name" value="Tudor_ARID4B_rpt2"/>
</dbReference>
<dbReference type="PANTHER" id="PTHR13964:SF24">
    <property type="entry name" value="AT-RICH INTERACTIVE DOMAIN-CONTAINING PROTEIN 4B"/>
    <property type="match status" value="1"/>
</dbReference>
<dbReference type="PANTHER" id="PTHR13964">
    <property type="entry name" value="RBP-RELATED"/>
    <property type="match status" value="1"/>
</dbReference>
<dbReference type="Pfam" id="PF01388">
    <property type="entry name" value="ARID"/>
    <property type="match status" value="1"/>
</dbReference>
<dbReference type="Pfam" id="PF08169">
    <property type="entry name" value="RBB1NT"/>
    <property type="match status" value="1"/>
</dbReference>
<dbReference type="Pfam" id="PF11717">
    <property type="entry name" value="Tudor-knot"/>
    <property type="match status" value="1"/>
</dbReference>
<dbReference type="SMART" id="SM01014">
    <property type="entry name" value="ARID"/>
    <property type="match status" value="1"/>
</dbReference>
<dbReference type="SMART" id="SM00501">
    <property type="entry name" value="BRIGHT"/>
    <property type="match status" value="1"/>
</dbReference>
<dbReference type="SMART" id="SM00333">
    <property type="entry name" value="TUDOR"/>
    <property type="match status" value="2"/>
</dbReference>
<dbReference type="SUPFAM" id="SSF46774">
    <property type="entry name" value="ARID-like"/>
    <property type="match status" value="1"/>
</dbReference>
<dbReference type="SUPFAM" id="SSF54160">
    <property type="entry name" value="Chromo domain-like"/>
    <property type="match status" value="1"/>
</dbReference>
<dbReference type="SUPFAM" id="SSF63748">
    <property type="entry name" value="Tudor/PWWP/MBT"/>
    <property type="match status" value="2"/>
</dbReference>
<dbReference type="PROSITE" id="PS51011">
    <property type="entry name" value="ARID"/>
    <property type="match status" value="1"/>
</dbReference>
<organism>
    <name type="scientific">Homo sapiens</name>
    <name type="common">Human</name>
    <dbReference type="NCBI Taxonomy" id="9606"/>
    <lineage>
        <taxon>Eukaryota</taxon>
        <taxon>Metazoa</taxon>
        <taxon>Chordata</taxon>
        <taxon>Craniata</taxon>
        <taxon>Vertebrata</taxon>
        <taxon>Euteleostomi</taxon>
        <taxon>Mammalia</taxon>
        <taxon>Eutheria</taxon>
        <taxon>Euarchontoglires</taxon>
        <taxon>Primates</taxon>
        <taxon>Haplorrhini</taxon>
        <taxon>Catarrhini</taxon>
        <taxon>Hominidae</taxon>
        <taxon>Homo</taxon>
    </lineage>
</organism>